<reference key="1">
    <citation type="journal article" date="2004" name="Nucleic Acids Res.">
        <title>Whole genome comparisons of serotype 4b and 1/2a strains of the food-borne pathogen Listeria monocytogenes reveal new insights into the core genome components of this species.</title>
        <authorList>
            <person name="Nelson K.E."/>
            <person name="Fouts D.E."/>
            <person name="Mongodin E.F."/>
            <person name="Ravel J."/>
            <person name="DeBoy R.T."/>
            <person name="Kolonay J.F."/>
            <person name="Rasko D.A."/>
            <person name="Angiuoli S.V."/>
            <person name="Gill S.R."/>
            <person name="Paulsen I.T."/>
            <person name="Peterson J.D."/>
            <person name="White O."/>
            <person name="Nelson W.C."/>
            <person name="Nierman W.C."/>
            <person name="Beanan M.J."/>
            <person name="Brinkac L.M."/>
            <person name="Daugherty S.C."/>
            <person name="Dodson R.J."/>
            <person name="Durkin A.S."/>
            <person name="Madupu R."/>
            <person name="Haft D.H."/>
            <person name="Selengut J."/>
            <person name="Van Aken S.E."/>
            <person name="Khouri H.M."/>
            <person name="Fedorova N."/>
            <person name="Forberger H.A."/>
            <person name="Tran B."/>
            <person name="Kathariou S."/>
            <person name="Wonderling L.D."/>
            <person name="Uhlich G.A."/>
            <person name="Bayles D.O."/>
            <person name="Luchansky J.B."/>
            <person name="Fraser C.M."/>
        </authorList>
    </citation>
    <scope>NUCLEOTIDE SEQUENCE [LARGE SCALE GENOMIC DNA]</scope>
    <source>
        <strain>F2365</strain>
    </source>
</reference>
<dbReference type="EMBL" id="AE017262">
    <property type="protein sequence ID" value="AAT05547.1"/>
    <property type="molecule type" value="Genomic_DNA"/>
</dbReference>
<dbReference type="RefSeq" id="WP_003725339.1">
    <property type="nucleotide sequence ID" value="NC_002973.6"/>
</dbReference>
<dbReference type="SMR" id="Q71VW9"/>
<dbReference type="KEGG" id="lmf:LMOf2365_2782"/>
<dbReference type="HOGENOM" id="CLU_023853_0_1_9"/>
<dbReference type="GO" id="GO:0005694">
    <property type="term" value="C:chromosome"/>
    <property type="evidence" value="ECO:0007669"/>
    <property type="project" value="TreeGrafter"/>
</dbReference>
<dbReference type="GO" id="GO:0005737">
    <property type="term" value="C:cytoplasm"/>
    <property type="evidence" value="ECO:0007669"/>
    <property type="project" value="UniProtKB-UniRule"/>
</dbReference>
<dbReference type="GO" id="GO:0009295">
    <property type="term" value="C:nucleoid"/>
    <property type="evidence" value="ECO:0007669"/>
    <property type="project" value="UniProtKB-SubCell"/>
</dbReference>
<dbReference type="GO" id="GO:0003677">
    <property type="term" value="F:DNA binding"/>
    <property type="evidence" value="ECO:0007669"/>
    <property type="project" value="UniProtKB-UniRule"/>
</dbReference>
<dbReference type="GO" id="GO:0007059">
    <property type="term" value="P:chromosome segregation"/>
    <property type="evidence" value="ECO:0007669"/>
    <property type="project" value="TreeGrafter"/>
</dbReference>
<dbReference type="GO" id="GO:0000917">
    <property type="term" value="P:division septum assembly"/>
    <property type="evidence" value="ECO:0007669"/>
    <property type="project" value="UniProtKB-KW"/>
</dbReference>
<dbReference type="GO" id="GO:0045881">
    <property type="term" value="P:positive regulation of sporulation resulting in formation of a cellular spore"/>
    <property type="evidence" value="ECO:0007669"/>
    <property type="project" value="TreeGrafter"/>
</dbReference>
<dbReference type="CDD" id="cd16393">
    <property type="entry name" value="SPO0J_N"/>
    <property type="match status" value="1"/>
</dbReference>
<dbReference type="FunFam" id="1.10.10.2830:FF:000001">
    <property type="entry name" value="Chromosome partitioning protein ParB"/>
    <property type="match status" value="1"/>
</dbReference>
<dbReference type="FunFam" id="3.90.1530.30:FF:000001">
    <property type="entry name" value="Chromosome partitioning protein ParB"/>
    <property type="match status" value="1"/>
</dbReference>
<dbReference type="Gene3D" id="1.10.10.2830">
    <property type="match status" value="1"/>
</dbReference>
<dbReference type="Gene3D" id="3.90.1530.30">
    <property type="match status" value="1"/>
</dbReference>
<dbReference type="HAMAP" id="MF_02015">
    <property type="entry name" value="ParB_Noc"/>
    <property type="match status" value="1"/>
</dbReference>
<dbReference type="InterPro" id="IPR050336">
    <property type="entry name" value="Chromosome_partition/occlusion"/>
</dbReference>
<dbReference type="InterPro" id="IPR041468">
    <property type="entry name" value="HTH_ParB/Spo0J"/>
</dbReference>
<dbReference type="InterPro" id="IPR023705">
    <property type="entry name" value="Nucleoid_occlusion_protein"/>
</dbReference>
<dbReference type="InterPro" id="IPR004437">
    <property type="entry name" value="ParB/RepB/Spo0J"/>
</dbReference>
<dbReference type="InterPro" id="IPR003115">
    <property type="entry name" value="ParB/Sulfiredoxin_dom"/>
</dbReference>
<dbReference type="InterPro" id="IPR036086">
    <property type="entry name" value="ParB/Sulfiredoxin_sf"/>
</dbReference>
<dbReference type="NCBIfam" id="TIGR04285">
    <property type="entry name" value="nucleoid_noc"/>
    <property type="match status" value="1"/>
</dbReference>
<dbReference type="NCBIfam" id="TIGR00180">
    <property type="entry name" value="parB_part"/>
    <property type="match status" value="1"/>
</dbReference>
<dbReference type="PANTHER" id="PTHR33375">
    <property type="entry name" value="CHROMOSOME-PARTITIONING PROTEIN PARB-RELATED"/>
    <property type="match status" value="1"/>
</dbReference>
<dbReference type="PANTHER" id="PTHR33375:SF8">
    <property type="entry name" value="NUCLEOID OCCLUSION PROTEIN"/>
    <property type="match status" value="1"/>
</dbReference>
<dbReference type="Pfam" id="PF17762">
    <property type="entry name" value="HTH_ParB"/>
    <property type="match status" value="1"/>
</dbReference>
<dbReference type="Pfam" id="PF02195">
    <property type="entry name" value="ParBc"/>
    <property type="match status" value="1"/>
</dbReference>
<dbReference type="SMART" id="SM00470">
    <property type="entry name" value="ParB"/>
    <property type="match status" value="1"/>
</dbReference>
<dbReference type="SUPFAM" id="SSF109709">
    <property type="entry name" value="KorB DNA-binding domain-like"/>
    <property type="match status" value="1"/>
</dbReference>
<dbReference type="SUPFAM" id="SSF110849">
    <property type="entry name" value="ParB/Sulfiredoxin"/>
    <property type="match status" value="1"/>
</dbReference>
<name>NOC_LISMF</name>
<gene>
    <name evidence="1" type="primary">noc</name>
    <name type="ordered locus">LMOf2365_2782</name>
</gene>
<comment type="function">
    <text evidence="1">Effects nucleoid occlusion by binding relatively nonspecifically to DNA and preventing the assembly of the division machinery in the vicinity of the nucleoid, especially under conditions that disturb the cell cycle. It helps to coordinate cell division and chromosome segregation by preventing the formation of the Z ring through the nucleoid, which would cause chromosome breakage.</text>
</comment>
<comment type="subcellular location">
    <subcellularLocation>
        <location evidence="1">Cytoplasm</location>
        <location evidence="1">Nucleoid</location>
    </subcellularLocation>
</comment>
<comment type="similarity">
    <text evidence="1">Belongs to the ParB family.</text>
</comment>
<accession>Q71VW9</accession>
<organism>
    <name type="scientific">Listeria monocytogenes serotype 4b (strain F2365)</name>
    <dbReference type="NCBI Taxonomy" id="265669"/>
    <lineage>
        <taxon>Bacteria</taxon>
        <taxon>Bacillati</taxon>
        <taxon>Bacillota</taxon>
        <taxon>Bacilli</taxon>
        <taxon>Bacillales</taxon>
        <taxon>Listeriaceae</taxon>
        <taxon>Listeria</taxon>
    </lineage>
</organism>
<protein>
    <recommendedName>
        <fullName evidence="1">Nucleoid occlusion protein</fullName>
        <shortName evidence="1">Noc</shortName>
    </recommendedName>
</protein>
<evidence type="ECO:0000255" key="1">
    <source>
        <dbReference type="HAMAP-Rule" id="MF_02015"/>
    </source>
</evidence>
<sequence length="284" mass="32776">MPFSRLFGKKEKNQMDDIVEEGVQRVQELPMDKIFPNQFQPRTVFDQDKIDELARTIRIHGVIQPIVVREMEPDYYEIIAGERRFRAVLSLEMEKIPAIIQNLDDEEVAAIALIENLQREELTPIEEAKAYRSLLDMQDVTQEALAQRVGKSQSAIANKMRLLKLPETVQEAVLNKQISERHARSLLALETEEQQVAILAEIAENHWNVKQTEARIQEILGVKKPVATKKTKPKRQAISRDVRIAMNTIKQSVTMVKDNGMDLDFTEEETDDFYQITIQIPKKK</sequence>
<proteinExistence type="inferred from homology"/>
<keyword id="KW-0131">Cell cycle</keyword>
<keyword id="KW-0132">Cell division</keyword>
<keyword id="KW-0963">Cytoplasm</keyword>
<keyword id="KW-0238">DNA-binding</keyword>
<keyword id="KW-0717">Septation</keyword>
<feature type="chain" id="PRO_0000346633" description="Nucleoid occlusion protein">
    <location>
        <begin position="1"/>
        <end position="284"/>
    </location>
</feature>
<feature type="DNA-binding region" description="H-T-H motif" evidence="1">
    <location>
        <begin position="143"/>
        <end position="162"/>
    </location>
</feature>